<gene>
    <name evidence="1" type="primary">msrQ</name>
    <name type="ordered locus">KPN78578_36300</name>
    <name type="ORF">KPN_03662</name>
</gene>
<name>MSRQ_KLEP7</name>
<sequence>MRFTVKQIVWLKVLLHLAGFLPLVWLFWAGHQGYFSADPAKDIQHFTGRMALKFLLATLLVSPLARYAKQPLLIRVRRLLGLWCFAWATLHLTSYTLLELGINNLALLGSEIITRPYLTLGMISWAILLALAVTSTQAMQRKLGRRWQLLHNFVYLVAILAPIHYLWSVKIVSPQPVVYALLAAGLLTWRYKKFRQWWRAIR</sequence>
<accession>A6TES0</accession>
<keyword id="KW-0997">Cell inner membrane</keyword>
<keyword id="KW-1003">Cell membrane</keyword>
<keyword id="KW-0249">Electron transport</keyword>
<keyword id="KW-0285">Flavoprotein</keyword>
<keyword id="KW-0288">FMN</keyword>
<keyword id="KW-0349">Heme</keyword>
<keyword id="KW-0408">Iron</keyword>
<keyword id="KW-0472">Membrane</keyword>
<keyword id="KW-0479">Metal-binding</keyword>
<keyword id="KW-0812">Transmembrane</keyword>
<keyword id="KW-1133">Transmembrane helix</keyword>
<keyword id="KW-0813">Transport</keyword>
<evidence type="ECO:0000255" key="1">
    <source>
        <dbReference type="HAMAP-Rule" id="MF_01207"/>
    </source>
</evidence>
<feature type="chain" id="PRO_1000066177" description="Protein-methionine-sulfoxide reductase heme-binding subunit MsrQ">
    <location>
        <begin position="1"/>
        <end position="202"/>
    </location>
</feature>
<feature type="transmembrane region" description="Helical" evidence="1">
    <location>
        <begin position="8"/>
        <end position="28"/>
    </location>
</feature>
<feature type="transmembrane region" description="Helical" evidence="1">
    <location>
        <begin position="82"/>
        <end position="102"/>
    </location>
</feature>
<feature type="transmembrane region" description="Helical" evidence="1">
    <location>
        <begin position="116"/>
        <end position="136"/>
    </location>
</feature>
<feature type="transmembrane region" description="Helical" evidence="1">
    <location>
        <begin position="149"/>
        <end position="169"/>
    </location>
</feature>
<feature type="transmembrane region" description="Helical" evidence="1">
    <location>
        <begin position="171"/>
        <end position="191"/>
    </location>
</feature>
<comment type="function">
    <text evidence="1">Part of the MsrPQ system that repairs oxidized periplasmic proteins containing methionine sulfoxide residues (Met-O), using respiratory chain electrons. Thus protects these proteins from oxidative-stress damage caused by reactive species of oxygen and chlorine generated by the host defense mechanisms. MsrPQ is essential for the maintenance of envelope integrity under bleach stress, rescuing a wide series of structurally unrelated periplasmic proteins from methionine oxidation. MsrQ provides electrons for reduction to the reductase catalytic subunit MsrP, using the quinone pool of the respiratory chain.</text>
</comment>
<comment type="cofactor">
    <cofactor evidence="1">
        <name>FMN</name>
        <dbReference type="ChEBI" id="CHEBI:58210"/>
    </cofactor>
    <text evidence="1">Binds 1 FMN per subunit.</text>
</comment>
<comment type="cofactor">
    <cofactor evidence="1">
        <name>heme b</name>
        <dbReference type="ChEBI" id="CHEBI:60344"/>
    </cofactor>
    <text evidence="1">Binds 1 heme b (iron(II)-protoporphyrin IX) group per subunit.</text>
</comment>
<comment type="subunit">
    <text evidence="1">Heterodimer of a catalytic subunit (MsrP) and a heme-binding subunit (MsrQ).</text>
</comment>
<comment type="subcellular location">
    <subcellularLocation>
        <location evidence="1">Cell inner membrane</location>
        <topology evidence="1">Multi-pass membrane protein</topology>
    </subcellularLocation>
</comment>
<comment type="similarity">
    <text evidence="1">Belongs to the MsrQ family.</text>
</comment>
<reference key="1">
    <citation type="submission" date="2006-09" db="EMBL/GenBank/DDBJ databases">
        <authorList>
            <consortium name="The Klebsiella pneumonia Genome Sequencing Project"/>
            <person name="McClelland M."/>
            <person name="Sanderson E.K."/>
            <person name="Spieth J."/>
            <person name="Clifton W.S."/>
            <person name="Latreille P."/>
            <person name="Sabo A."/>
            <person name="Pepin K."/>
            <person name="Bhonagiri V."/>
            <person name="Porwollik S."/>
            <person name="Ali J."/>
            <person name="Wilson R.K."/>
        </authorList>
    </citation>
    <scope>NUCLEOTIDE SEQUENCE [LARGE SCALE GENOMIC DNA]</scope>
    <source>
        <strain>ATCC 700721 / MGH 78578</strain>
    </source>
</reference>
<dbReference type="EMBL" id="CP000647">
    <property type="protein sequence ID" value="ABR79054.1"/>
    <property type="molecule type" value="Genomic_DNA"/>
</dbReference>
<dbReference type="RefSeq" id="WP_015959072.1">
    <property type="nucleotide sequence ID" value="NC_009648.1"/>
</dbReference>
<dbReference type="SMR" id="A6TES0"/>
<dbReference type="STRING" id="272620.KPN_03662"/>
<dbReference type="PaxDb" id="272620-KPN_03662"/>
<dbReference type="EnsemblBacteria" id="ABR79054">
    <property type="protein sequence ID" value="ABR79054"/>
    <property type="gene ID" value="KPN_03662"/>
</dbReference>
<dbReference type="KEGG" id="kpn:KPN_03662"/>
<dbReference type="HOGENOM" id="CLU_080662_1_0_6"/>
<dbReference type="Proteomes" id="UP000000265">
    <property type="component" value="Chromosome"/>
</dbReference>
<dbReference type="GO" id="GO:0005886">
    <property type="term" value="C:plasma membrane"/>
    <property type="evidence" value="ECO:0007669"/>
    <property type="project" value="UniProtKB-SubCell"/>
</dbReference>
<dbReference type="GO" id="GO:0009055">
    <property type="term" value="F:electron transfer activity"/>
    <property type="evidence" value="ECO:0007669"/>
    <property type="project" value="UniProtKB-UniRule"/>
</dbReference>
<dbReference type="GO" id="GO:0010181">
    <property type="term" value="F:FMN binding"/>
    <property type="evidence" value="ECO:0007669"/>
    <property type="project" value="UniProtKB-UniRule"/>
</dbReference>
<dbReference type="GO" id="GO:0020037">
    <property type="term" value="F:heme binding"/>
    <property type="evidence" value="ECO:0007669"/>
    <property type="project" value="UniProtKB-UniRule"/>
</dbReference>
<dbReference type="GO" id="GO:0046872">
    <property type="term" value="F:metal ion binding"/>
    <property type="evidence" value="ECO:0007669"/>
    <property type="project" value="UniProtKB-KW"/>
</dbReference>
<dbReference type="GO" id="GO:0016679">
    <property type="term" value="F:oxidoreductase activity, acting on diphenols and related substances as donors"/>
    <property type="evidence" value="ECO:0007669"/>
    <property type="project" value="TreeGrafter"/>
</dbReference>
<dbReference type="GO" id="GO:0030091">
    <property type="term" value="P:protein repair"/>
    <property type="evidence" value="ECO:0007669"/>
    <property type="project" value="UniProtKB-UniRule"/>
</dbReference>
<dbReference type="HAMAP" id="MF_01207">
    <property type="entry name" value="MsrQ"/>
    <property type="match status" value="1"/>
</dbReference>
<dbReference type="InterPro" id="IPR013130">
    <property type="entry name" value="Fe3_Rdtase_TM_dom"/>
</dbReference>
<dbReference type="InterPro" id="IPR022837">
    <property type="entry name" value="MsrQ-like"/>
</dbReference>
<dbReference type="NCBIfam" id="NF003831">
    <property type="entry name" value="PRK05419.1-2"/>
    <property type="match status" value="1"/>
</dbReference>
<dbReference type="NCBIfam" id="NF003832">
    <property type="entry name" value="PRK05419.1-4"/>
    <property type="match status" value="1"/>
</dbReference>
<dbReference type="PANTHER" id="PTHR36964">
    <property type="entry name" value="PROTEIN-METHIONINE-SULFOXIDE REDUCTASE HEME-BINDING SUBUNIT MSRQ"/>
    <property type="match status" value="1"/>
</dbReference>
<dbReference type="PANTHER" id="PTHR36964:SF1">
    <property type="entry name" value="PROTEIN-METHIONINE-SULFOXIDE REDUCTASE HEME-BINDING SUBUNIT MSRQ"/>
    <property type="match status" value="1"/>
</dbReference>
<dbReference type="Pfam" id="PF01794">
    <property type="entry name" value="Ferric_reduct"/>
    <property type="match status" value="1"/>
</dbReference>
<organism>
    <name type="scientific">Klebsiella pneumoniae subsp. pneumoniae (strain ATCC 700721 / MGH 78578)</name>
    <dbReference type="NCBI Taxonomy" id="272620"/>
    <lineage>
        <taxon>Bacteria</taxon>
        <taxon>Pseudomonadati</taxon>
        <taxon>Pseudomonadota</taxon>
        <taxon>Gammaproteobacteria</taxon>
        <taxon>Enterobacterales</taxon>
        <taxon>Enterobacteriaceae</taxon>
        <taxon>Klebsiella/Raoultella group</taxon>
        <taxon>Klebsiella</taxon>
        <taxon>Klebsiella pneumoniae complex</taxon>
    </lineage>
</organism>
<protein>
    <recommendedName>
        <fullName evidence="1">Protein-methionine-sulfoxide reductase heme-binding subunit MsrQ</fullName>
    </recommendedName>
    <alternativeName>
        <fullName evidence="1">Flavocytochrome MsrQ</fullName>
    </alternativeName>
</protein>
<proteinExistence type="inferred from homology"/>